<gene>
    <name evidence="1" type="primary">gyrA</name>
</gene>
<accession>P20831</accession>
<evidence type="ECO:0000255" key="1">
    <source>
        <dbReference type="HAMAP-Rule" id="MF_01897"/>
    </source>
</evidence>
<evidence type="ECO:0000255" key="2">
    <source>
        <dbReference type="PROSITE-ProRule" id="PRU01384"/>
    </source>
</evidence>
<evidence type="ECO:0000256" key="3">
    <source>
        <dbReference type="SAM" id="MobiDB-lite"/>
    </source>
</evidence>
<evidence type="ECO:0000305" key="4"/>
<evidence type="ECO:0007829" key="5">
    <source>
        <dbReference type="PDB" id="6Z1A"/>
    </source>
</evidence>
<name>GYRA_STAAU</name>
<protein>
    <recommendedName>
        <fullName evidence="1">DNA gyrase subunit A</fullName>
        <ecNumber evidence="1">5.6.2.2</ecNumber>
    </recommendedName>
</protein>
<feature type="chain" id="PRO_0000145254" description="DNA gyrase subunit A">
    <location>
        <begin position="1"/>
        <end position="889"/>
    </location>
</feature>
<feature type="domain" description="Topo IIA-type catalytic" evidence="2">
    <location>
        <begin position="35"/>
        <end position="501"/>
    </location>
</feature>
<feature type="region of interest" description="Disordered" evidence="3">
    <location>
        <begin position="811"/>
        <end position="889"/>
    </location>
</feature>
<feature type="short sequence motif" description="GyrA-box" evidence="1">
    <location>
        <begin position="528"/>
        <end position="534"/>
    </location>
</feature>
<feature type="compositionally biased region" description="Acidic residues" evidence="3">
    <location>
        <begin position="813"/>
        <end position="823"/>
    </location>
</feature>
<feature type="compositionally biased region" description="Basic and acidic residues" evidence="3">
    <location>
        <begin position="863"/>
        <end position="875"/>
    </location>
</feature>
<feature type="compositionally biased region" description="Acidic residues" evidence="3">
    <location>
        <begin position="876"/>
        <end position="889"/>
    </location>
</feature>
<feature type="active site" description="O-(5'-phospho-DNA)-tyrosine intermediate" evidence="1">
    <location>
        <position position="123"/>
    </location>
</feature>
<feature type="mutagenesis site" description="Resistant to fluoroquinolones.">
    <original>S</original>
    <variation>P</variation>
    <location>
        <position position="85"/>
    </location>
</feature>
<feature type="sequence conflict" description="In Ref. 2; CAA50571." evidence="4" ref="2">
    <original>D</original>
    <variation>N</variation>
    <location>
        <position position="439"/>
    </location>
</feature>
<feature type="sequence conflict" description="In Ref. 2; CAA50571." evidence="4" ref="2">
    <original>D</original>
    <variation>E</variation>
    <location>
        <position position="483"/>
    </location>
</feature>
<feature type="sequence conflict" description="In Ref. 2; CAA50571." evidence="4" ref="2">
    <original>E</original>
    <variation>G</variation>
    <location>
        <position position="594"/>
    </location>
</feature>
<feature type="sequence conflict" description="In Ref. 1; AAA73952." evidence="4" ref="1">
    <original>A</original>
    <variation>E</variation>
    <location>
        <position position="709"/>
    </location>
</feature>
<feature type="sequence conflict" description="In Ref. 2; CAA50571." evidence="4" ref="2">
    <location>
        <position position="815"/>
    </location>
</feature>
<feature type="sequence conflict" description="In Ref. 2; CAA50571." evidence="4" ref="2">
    <original>T</original>
    <variation>V</variation>
    <location>
        <position position="818"/>
    </location>
</feature>
<feature type="sequence conflict" description="In Ref. 2; AA sequence." evidence="4" ref="2">
    <location>
        <begin position="825"/>
        <end position="826"/>
    </location>
</feature>
<feature type="sequence conflict" description="In Ref. 1; AAA73952." evidence="4" ref="1">
    <original>D</original>
    <variation>E</variation>
    <location>
        <position position="856"/>
    </location>
</feature>
<feature type="sequence conflict" description="In Ref. 1; AAA73952." evidence="4" ref="1">
    <original>N</original>
    <variation>T</variation>
    <location>
        <position position="860"/>
    </location>
</feature>
<feature type="sequence conflict" description="In Ref. 1; AAA73952." evidence="4" ref="1">
    <original>E</original>
    <variation>D</variation>
    <location>
        <position position="862"/>
    </location>
</feature>
<feature type="sequence conflict" description="In Ref. 3; BAA01370." evidence="4" ref="3">
    <original>LDE</original>
    <variation>S</variation>
    <location>
        <begin position="884"/>
        <end position="886"/>
    </location>
</feature>
<feature type="sequence conflict" description="In Ref. 2; CAA50571." evidence="4" ref="2">
    <original>L</original>
    <variation>S</variation>
    <location>
        <position position="884"/>
    </location>
</feature>
<feature type="strand" evidence="5">
    <location>
        <begin position="11"/>
        <end position="13"/>
    </location>
</feature>
<feature type="helix" evidence="5">
    <location>
        <begin position="14"/>
        <end position="32"/>
    </location>
</feature>
<feature type="turn" evidence="5">
    <location>
        <begin position="38"/>
        <end position="40"/>
    </location>
</feature>
<feature type="helix" evidence="5">
    <location>
        <begin position="44"/>
        <end position="55"/>
    </location>
</feature>
<feature type="helix" evidence="5">
    <location>
        <begin position="67"/>
        <end position="77"/>
    </location>
</feature>
<feature type="helix" evidence="5">
    <location>
        <begin position="83"/>
        <end position="93"/>
    </location>
</feature>
<feature type="turn" evidence="5">
    <location>
        <begin position="96"/>
        <end position="98"/>
    </location>
</feature>
<feature type="strand" evidence="5">
    <location>
        <begin position="103"/>
        <end position="108"/>
    </location>
</feature>
<feature type="turn" evidence="5">
    <location>
        <begin position="121"/>
        <end position="123"/>
    </location>
</feature>
<feature type="strand" evidence="5">
    <location>
        <begin position="125"/>
        <end position="128"/>
    </location>
</feature>
<feature type="helix" evidence="5">
    <location>
        <begin position="130"/>
        <end position="136"/>
    </location>
</feature>
<feature type="turn" evidence="5">
    <location>
        <begin position="137"/>
        <end position="142"/>
    </location>
</feature>
<feature type="strand" evidence="5">
    <location>
        <begin position="146"/>
        <end position="148"/>
    </location>
</feature>
<feature type="strand" evidence="5">
    <location>
        <begin position="155"/>
        <end position="159"/>
    </location>
</feature>
<feature type="helix" evidence="5">
    <location>
        <begin position="166"/>
        <end position="170"/>
    </location>
</feature>
<feature type="strand" evidence="5">
    <location>
        <begin position="172"/>
        <end position="175"/>
    </location>
</feature>
<feature type="strand" evidence="5">
    <location>
        <begin position="180"/>
        <end position="183"/>
    </location>
</feature>
<feature type="helix" evidence="5">
    <location>
        <begin position="188"/>
        <end position="199"/>
    </location>
</feature>
<feature type="helix" evidence="5">
    <location>
        <begin position="206"/>
        <end position="209"/>
    </location>
</feature>
<feature type="turn" evidence="5">
    <location>
        <begin position="210"/>
        <end position="212"/>
    </location>
</feature>
<feature type="strand" evidence="5">
    <location>
        <begin position="223"/>
        <end position="225"/>
    </location>
</feature>
<feature type="helix" evidence="5">
    <location>
        <begin position="228"/>
        <end position="236"/>
    </location>
</feature>
<feature type="strand" evidence="5">
    <location>
        <begin position="237"/>
        <end position="244"/>
    </location>
</feature>
<feature type="strand" evidence="5">
    <location>
        <begin position="246"/>
        <end position="253"/>
    </location>
</feature>
<feature type="strand" evidence="5">
    <location>
        <begin position="256"/>
        <end position="263"/>
    </location>
</feature>
<feature type="helix" evidence="5">
    <location>
        <begin position="270"/>
        <end position="282"/>
    </location>
</feature>
<feature type="strand" evidence="5">
    <location>
        <begin position="286"/>
        <end position="294"/>
    </location>
</feature>
<feature type="turn" evidence="5">
    <location>
        <begin position="298"/>
        <end position="300"/>
    </location>
</feature>
<feature type="strand" evidence="5">
    <location>
        <begin position="304"/>
        <end position="308"/>
    </location>
</feature>
<feature type="helix" evidence="5">
    <location>
        <begin position="314"/>
        <end position="324"/>
    </location>
</feature>
<feature type="strand" evidence="5">
    <location>
        <begin position="328"/>
        <end position="334"/>
    </location>
</feature>
<feature type="strand" evidence="5">
    <location>
        <begin position="336"/>
        <end position="339"/>
    </location>
</feature>
<feature type="strand" evidence="5">
    <location>
        <begin position="342"/>
        <end position="345"/>
    </location>
</feature>
<feature type="helix" evidence="5">
    <location>
        <begin position="348"/>
        <end position="389"/>
    </location>
</feature>
<feature type="helix" evidence="5">
    <location>
        <begin position="391"/>
        <end position="399"/>
    </location>
</feature>
<feature type="helix" evidence="5">
    <location>
        <begin position="404"/>
        <end position="415"/>
    </location>
</feature>
<feature type="helix" evidence="5">
    <location>
        <begin position="419"/>
        <end position="427"/>
    </location>
</feature>
<feature type="helix" evidence="5">
    <location>
        <begin position="430"/>
        <end position="433"/>
    </location>
</feature>
<feature type="helix" evidence="5">
    <location>
        <begin position="437"/>
        <end position="459"/>
    </location>
</feature>
<feature type="helix" evidence="5">
    <location>
        <begin position="462"/>
        <end position="480"/>
    </location>
</feature>
<feature type="strand" evidence="5">
    <location>
        <begin position="486"/>
        <end position="489"/>
    </location>
</feature>
<organism>
    <name type="scientific">Staphylococcus aureus</name>
    <dbReference type="NCBI Taxonomy" id="1280"/>
    <lineage>
        <taxon>Bacteria</taxon>
        <taxon>Bacillati</taxon>
        <taxon>Bacillota</taxon>
        <taxon>Bacilli</taxon>
        <taxon>Bacillales</taxon>
        <taxon>Staphylococcaceae</taxon>
        <taxon>Staphylococcus</taxon>
    </lineage>
</organism>
<proteinExistence type="evidence at protein level"/>
<sequence>MAELPQSRINERNITSEMRESFLDYAMSVIVARALPDVRDGLKPVHRRILYGLNEQGMTPDKSYKKSARIVGDVMGKYHPHGDSSIYEAMVRMAQDFSYRYPLVDGQGNFGSMDGDGAAAMRYTEARMTKITLELLRDINKDTIDFIDNYDGNEREPSVLPARFPNLLANGASGIAVGMATNIPPHNLTELINGVLSLSKNPDISIAELMEDIEGPDFPTAGLILGKSGIRRAYETGRGSIQMRSRAVIEERGGGRQRIVVTEIPFQVNKARMIEKIAELVRDKKIDGITDLRDETSLRTGVRVVIDVRKDANASVILNNLYKQTPLQTSFGVNMIALVNGRPKLINLKEALVHYLEHQKTVVRRRTQYNLRKAKDRAHILEGLRIALDHIDEIISTIRESDTDKVAMESLQQRFKLSEKQAQAILDMRLRRLTGLERDKIEAEYNELLNYISELEAILADEEVLLQLVRDELTEIRDRFGDDRRTEIQLGGFEDLEDEDLIPEEQIVITLSHNNYIKRLPVSTYRAQNRGGRGVQGMNTLEEDFVSQLVTLSTHDHVLFFTNKGRVYKLKGYEVPELSRQSKGIPVVNAIELENDEVISTMIAVKDLESEDNFLVFATKRGVVKRSALSNFSRINRNGKIAISFREDDELIAVRLTSGQEDILIGTSHASLIRFPESTLRPLGRTATGVKGITLREGDEVVGLDVAHANSVDEVLVVTENGYGKRTPVNDYRLSNRGGKGIKTATITERNGNVVCITTVTGEEDLMIVTNAGVIIRLDVADISQNGRAAQGVRLIRLGDDQFVSTVAKVKEDAEDETNEDEQSTSTVSEDGTEQQREAVVNDETPGNAIHTEVIDSEENDEDGRIEVRQDFMDRVEEDIQQSLDEDEE</sequence>
<comment type="function">
    <text evidence="1">A type II topoisomerase that negatively supercoils closed circular double-stranded (ds) DNA in an ATP-dependent manner to modulate DNA topology and maintain chromosomes in an underwound state. Negative supercoiling favors strand separation, and DNA replication, transcription, recombination and repair, all of which involve strand separation. Also able to catalyze the interconversion of other topological isomers of dsDNA rings, including catenanes and knotted rings. Type II topoisomerases break and join 2 DNA strands simultaneously in an ATP-dependent manner.</text>
</comment>
<comment type="catalytic activity">
    <reaction evidence="1">
        <text>ATP-dependent breakage, passage and rejoining of double-stranded DNA.</text>
        <dbReference type="EC" id="5.6.2.2"/>
    </reaction>
</comment>
<comment type="subunit">
    <text evidence="1">Heterotetramer, composed of two GyrA and two GyrB chains. In the heterotetramer, GyrA contains the active site tyrosine that forms a transient covalent intermediate with DNA, while GyrB binds cofactors and catalyzes ATP hydrolysis.</text>
</comment>
<comment type="subcellular location">
    <subcellularLocation>
        <location evidence="1">Cytoplasm</location>
    </subcellularLocation>
</comment>
<comment type="miscellaneous">
    <text evidence="1">Few gyrases are as efficient as E.coli at forming negative supercoils. Not all organisms have 2 type II topoisomerases; in organisms with a single type II topoisomerase this enzyme also has to decatenate newly replicated chromosomes.</text>
</comment>
<comment type="similarity">
    <text evidence="1">Belongs to the type II topoisomerase GyrA/ParC subunit family.</text>
</comment>
<reference key="1">
    <citation type="journal article" date="1992" name="J. Bacteriol.">
        <title>Nucleotide sequence of the Staphylococcus aureus gyrB-gyrA locus encoding the DNA gyrase A and B proteins.</title>
        <authorList>
            <person name="Margerrison E.E.C."/>
            <person name="Hopewell R."/>
            <person name="Fisher L.M."/>
        </authorList>
    </citation>
    <scope>NUCLEOTIDE SEQUENCE [GENOMIC DNA]</scope>
</reference>
<reference key="2">
    <citation type="journal article" date="1993" name="J. Bacteriol.">
        <title>Cloning, sequencing, and expression of the DNA gyrase genes from Staphylococcus aureus.</title>
        <authorList>
            <person name="Brockbank S.M.V."/>
            <person name="Barth P.T."/>
        </authorList>
    </citation>
    <scope>NUCLEOTIDE SEQUENCE [GENOMIC DNA]</scope>
    <scope>PROTEIN SEQUENCE OF 1-16</scope>
    <source>
        <strain>601055</strain>
    </source>
</reference>
<reference key="3">
    <citation type="journal article" date="1994" name="Antimicrob. Agents Chemother.">
        <title>Quinolone resistance mutations in the DNA gyrase gyrA and gyrB genes of Staphylococcus aureus.</title>
        <authorList>
            <person name="Ito H."/>
            <person name="Yoshida H."/>
            <person name="Bogaki-Shonai M."/>
            <person name="Niga T."/>
            <person name="Hattori H."/>
            <person name="Nakamura S."/>
        </authorList>
    </citation>
    <scope>NUCLEOTIDE SEQUENCE [GENOMIC DNA]</scope>
    <source>
        <strain>ATCC 12600 / DSM 20231 / IAM 12544 / NCDO 949 / NCTC 8532</strain>
    </source>
</reference>
<reference key="4">
    <citation type="journal article" date="1990" name="J. Bacteriol.">
        <title>DNA cloning and organization of the Staphylococcus aureus gyrA and gyrB genes: close homology among gyrase proteins and implications for 4-quinolone action and resistance.</title>
        <authorList>
            <person name="Hopewell R."/>
            <person name="Oram M."/>
            <person name="Briesewitz R."/>
            <person name="Fisher L.M."/>
        </authorList>
    </citation>
    <scope>NUCLEOTIDE SEQUENCE [GENOMIC DNA] OF 1-146</scope>
</reference>
<reference key="5">
    <citation type="journal article" date="1990" name="J. Bacteriol.">
        <title>DNA gyrase gyrA mutations in ciprofloxacin-resistant strains of Staphylococcus aureus: close similarity with quinolone resistance mutations in Escherichia coli.</title>
        <authorList>
            <person name="Sreedharan S."/>
            <person name="Oram M."/>
            <person name="Jensen B."/>
            <person name="Peterson L.R."/>
            <person name="Fisher L.M."/>
        </authorList>
    </citation>
    <scope>NUCLEOTIDE SEQUENCE [GENOMIC DNA] OF 81-91</scope>
</reference>
<reference key="6">
    <citation type="journal article" date="1992" name="Antimicrob. Agents Chemother.">
        <title>Detection of gyrA gene mutations associated with ciprofloxacin resistance in methicillin-resistant Staphylococcus aureus: analysis by polymerase chain reaction and automated direct DNA sequencing.</title>
        <authorList>
            <person name="Goswitz J.J."/>
            <person name="Willard K.E."/>
            <person name="Fasching C.E."/>
            <person name="Peterson L.R."/>
        </authorList>
    </citation>
    <scope>NUCLEOTIDE SEQUENCE [GENOMIC DNA] OF 67-129</scope>
</reference>
<keyword id="KW-0002">3D-structure</keyword>
<keyword id="KW-0046">Antibiotic resistance</keyword>
<keyword id="KW-0067">ATP-binding</keyword>
<keyword id="KW-0963">Cytoplasm</keyword>
<keyword id="KW-0903">Direct protein sequencing</keyword>
<keyword id="KW-0238">DNA-binding</keyword>
<keyword id="KW-0413">Isomerase</keyword>
<keyword id="KW-0547">Nucleotide-binding</keyword>
<keyword id="KW-0799">Topoisomerase</keyword>
<dbReference type="EC" id="5.6.2.2" evidence="1"/>
<dbReference type="EMBL" id="M86227">
    <property type="protein sequence ID" value="AAA73952.1"/>
    <property type="molecule type" value="Genomic_DNA"/>
</dbReference>
<dbReference type="EMBL" id="X71437">
    <property type="protein sequence ID" value="CAA50571.1"/>
    <property type="molecule type" value="Genomic_DNA"/>
</dbReference>
<dbReference type="EMBL" id="D10489">
    <property type="protein sequence ID" value="BAA01370.1"/>
    <property type="molecule type" value="Genomic_DNA"/>
</dbReference>
<dbReference type="EMBL" id="M37915">
    <property type="protein sequence ID" value="AAA26636.1"/>
    <property type="molecule type" value="Genomic_DNA"/>
</dbReference>
<dbReference type="PIR" id="B40585">
    <property type="entry name" value="B40585"/>
</dbReference>
<dbReference type="PDB" id="4PLB">
    <property type="method" value="X-ray"/>
    <property type="resolution" value="2.69 A"/>
    <property type="chains" value="B/D=2-491"/>
</dbReference>
<dbReference type="PDB" id="5BS3">
    <property type="method" value="X-ray"/>
    <property type="resolution" value="2.65 A"/>
    <property type="chains" value="B/D=2-491"/>
</dbReference>
<dbReference type="PDB" id="6Z1A">
    <property type="method" value="X-ray"/>
    <property type="resolution" value="2.30 A"/>
    <property type="chains" value="B/D=2-491"/>
</dbReference>
<dbReference type="PDBsum" id="4PLB"/>
<dbReference type="PDBsum" id="5BS3"/>
<dbReference type="PDBsum" id="6Z1A"/>
<dbReference type="SMR" id="P20831"/>
<dbReference type="BindingDB" id="P20831"/>
<dbReference type="ChEMBL" id="CHEMBL2424506"/>
<dbReference type="DrugBank" id="DB06771">
    <property type="generic name" value="Besifloxacin"/>
</dbReference>
<dbReference type="DrugBank" id="DB00537">
    <property type="generic name" value="Ciprofloxacin"/>
</dbReference>
<dbReference type="DrugBank" id="DB14025">
    <property type="generic name" value="Clinafloxacin"/>
</dbReference>
<dbReference type="DrugBank" id="DB11393">
    <property type="generic name" value="Danofloxacin"/>
</dbReference>
<dbReference type="DrugBank" id="DB09047">
    <property type="generic name" value="Finafloxacin"/>
</dbReference>
<dbReference type="DrugBank" id="DB01044">
    <property type="generic name" value="Gatifloxacin"/>
</dbReference>
<dbReference type="DrugBank" id="DB01155">
    <property type="generic name" value="Gemifloxacin"/>
</dbReference>
<dbReference type="DrugBank" id="DB00365">
    <property type="generic name" value="Grepafloxacin"/>
</dbReference>
<dbReference type="DrugBank" id="DB01137">
    <property type="generic name" value="Levofloxacin"/>
</dbReference>
<dbReference type="DrugBank" id="DB00218">
    <property type="generic name" value="Moxifloxacin"/>
</dbReference>
<dbReference type="DrugBank" id="DB06600">
    <property type="generic name" value="Nemonoxacin"/>
</dbReference>
<dbReference type="DrugBank" id="DB01059">
    <property type="generic name" value="Norfloxacin"/>
</dbReference>
<dbReference type="DrugBank" id="DB01165">
    <property type="generic name" value="Ofloxacin"/>
</dbReference>
<dbReference type="DrugBank" id="DB12924">
    <property type="generic name" value="Ozenoxacin"/>
</dbReference>
<dbReference type="DrugBank" id="DB11774">
    <property type="generic name" value="Pazufloxacin"/>
</dbReference>
<dbReference type="DrugBank" id="DB11892">
    <property type="generic name" value="Prulifloxacin"/>
</dbReference>
<dbReference type="DrugBank" id="DB01208">
    <property type="generic name" value="Sparfloxacin"/>
</dbReference>
<dbReference type="DrugBank" id="DB01405">
    <property type="generic name" value="Temafloxacin"/>
</dbReference>
<dbReference type="DrugBank" id="DB16312">
    <property type="generic name" value="TNP-2092"/>
</dbReference>
<dbReference type="DrugBank" id="DB00685">
    <property type="generic name" value="Trovafloxacin"/>
</dbReference>
<dbReference type="DrugBank" id="DB12817">
    <property type="generic name" value="Zoliflodacin"/>
</dbReference>
<dbReference type="GO" id="GO:0005694">
    <property type="term" value="C:chromosome"/>
    <property type="evidence" value="ECO:0007669"/>
    <property type="project" value="InterPro"/>
</dbReference>
<dbReference type="GO" id="GO:0005737">
    <property type="term" value="C:cytoplasm"/>
    <property type="evidence" value="ECO:0007669"/>
    <property type="project" value="UniProtKB-SubCell"/>
</dbReference>
<dbReference type="GO" id="GO:0009330">
    <property type="term" value="C:DNA topoisomerase type II (double strand cut, ATP-hydrolyzing) complex"/>
    <property type="evidence" value="ECO:0007669"/>
    <property type="project" value="TreeGrafter"/>
</dbReference>
<dbReference type="GO" id="GO:0005524">
    <property type="term" value="F:ATP binding"/>
    <property type="evidence" value="ECO:0007669"/>
    <property type="project" value="UniProtKB-UniRule"/>
</dbReference>
<dbReference type="GO" id="GO:0003677">
    <property type="term" value="F:DNA binding"/>
    <property type="evidence" value="ECO:0007669"/>
    <property type="project" value="UniProtKB-UniRule"/>
</dbReference>
<dbReference type="GO" id="GO:0034335">
    <property type="term" value="F:DNA negative supercoiling activity"/>
    <property type="evidence" value="ECO:0007669"/>
    <property type="project" value="UniProtKB-ARBA"/>
</dbReference>
<dbReference type="GO" id="GO:0006265">
    <property type="term" value="P:DNA topological change"/>
    <property type="evidence" value="ECO:0007669"/>
    <property type="project" value="UniProtKB-UniRule"/>
</dbReference>
<dbReference type="GO" id="GO:0006261">
    <property type="term" value="P:DNA-templated DNA replication"/>
    <property type="evidence" value="ECO:0007669"/>
    <property type="project" value="UniProtKB-UniRule"/>
</dbReference>
<dbReference type="GO" id="GO:0046677">
    <property type="term" value="P:response to antibiotic"/>
    <property type="evidence" value="ECO:0007669"/>
    <property type="project" value="UniProtKB-KW"/>
</dbReference>
<dbReference type="CDD" id="cd00187">
    <property type="entry name" value="TOP4c"/>
    <property type="match status" value="1"/>
</dbReference>
<dbReference type="FunFam" id="1.10.268.10:FF:000001">
    <property type="entry name" value="DNA gyrase subunit A"/>
    <property type="match status" value="1"/>
</dbReference>
<dbReference type="FunFam" id="2.120.10.90:FF:000004">
    <property type="entry name" value="DNA gyrase subunit A"/>
    <property type="match status" value="1"/>
</dbReference>
<dbReference type="FunFam" id="3.30.1360.40:FF:000002">
    <property type="entry name" value="DNA gyrase subunit A"/>
    <property type="match status" value="1"/>
</dbReference>
<dbReference type="FunFam" id="3.90.199.10:FF:000001">
    <property type="entry name" value="DNA gyrase subunit A"/>
    <property type="match status" value="1"/>
</dbReference>
<dbReference type="Gene3D" id="3.30.1360.40">
    <property type="match status" value="1"/>
</dbReference>
<dbReference type="Gene3D" id="2.120.10.90">
    <property type="entry name" value="DNA gyrase/topoisomerase IV, subunit A, C-terminal"/>
    <property type="match status" value="1"/>
</dbReference>
<dbReference type="Gene3D" id="3.90.199.10">
    <property type="entry name" value="Topoisomerase II, domain 5"/>
    <property type="match status" value="1"/>
</dbReference>
<dbReference type="Gene3D" id="1.10.268.10">
    <property type="entry name" value="Topoisomerase, domain 3"/>
    <property type="match status" value="1"/>
</dbReference>
<dbReference type="HAMAP" id="MF_01897">
    <property type="entry name" value="GyrA"/>
    <property type="match status" value="1"/>
</dbReference>
<dbReference type="InterPro" id="IPR005743">
    <property type="entry name" value="GyrA"/>
</dbReference>
<dbReference type="InterPro" id="IPR006691">
    <property type="entry name" value="GyrA/parC_rep"/>
</dbReference>
<dbReference type="InterPro" id="IPR035516">
    <property type="entry name" value="Gyrase/topoIV_suA_C"/>
</dbReference>
<dbReference type="InterPro" id="IPR013760">
    <property type="entry name" value="Topo_IIA-like_dom_sf"/>
</dbReference>
<dbReference type="InterPro" id="IPR013758">
    <property type="entry name" value="Topo_IIA_A/C_ab"/>
</dbReference>
<dbReference type="InterPro" id="IPR013757">
    <property type="entry name" value="Topo_IIA_A_a_sf"/>
</dbReference>
<dbReference type="InterPro" id="IPR002205">
    <property type="entry name" value="Topo_IIA_dom_A"/>
</dbReference>
<dbReference type="InterPro" id="IPR050220">
    <property type="entry name" value="Type_II_DNA_Topoisomerases"/>
</dbReference>
<dbReference type="NCBIfam" id="TIGR01063">
    <property type="entry name" value="gyrA"/>
    <property type="match status" value="1"/>
</dbReference>
<dbReference type="NCBIfam" id="NF004043">
    <property type="entry name" value="PRK05560.1"/>
    <property type="match status" value="1"/>
</dbReference>
<dbReference type="NCBIfam" id="NF004044">
    <property type="entry name" value="PRK05561.1"/>
    <property type="match status" value="1"/>
</dbReference>
<dbReference type="PANTHER" id="PTHR43493:SF5">
    <property type="entry name" value="DNA GYRASE SUBUNIT A, CHLOROPLASTIC_MITOCHONDRIAL"/>
    <property type="match status" value="1"/>
</dbReference>
<dbReference type="PANTHER" id="PTHR43493">
    <property type="entry name" value="DNA GYRASE/TOPOISOMERASE SUBUNIT A"/>
    <property type="match status" value="1"/>
</dbReference>
<dbReference type="Pfam" id="PF03989">
    <property type="entry name" value="DNA_gyraseA_C"/>
    <property type="match status" value="6"/>
</dbReference>
<dbReference type="Pfam" id="PF00521">
    <property type="entry name" value="DNA_topoisoIV"/>
    <property type="match status" value="1"/>
</dbReference>
<dbReference type="SMART" id="SM00434">
    <property type="entry name" value="TOP4c"/>
    <property type="match status" value="1"/>
</dbReference>
<dbReference type="SUPFAM" id="SSF101904">
    <property type="entry name" value="GyrA/ParC C-terminal domain-like"/>
    <property type="match status" value="1"/>
</dbReference>
<dbReference type="SUPFAM" id="SSF56719">
    <property type="entry name" value="Type II DNA topoisomerase"/>
    <property type="match status" value="1"/>
</dbReference>
<dbReference type="PROSITE" id="PS52040">
    <property type="entry name" value="TOPO_IIA"/>
    <property type="match status" value="1"/>
</dbReference>